<name>YEEG_BACSU</name>
<gene>
    <name type="primary">yeeG</name>
    <name type="ordered locus">BSU06820</name>
</gene>
<organism>
    <name type="scientific">Bacillus subtilis (strain 168)</name>
    <dbReference type="NCBI Taxonomy" id="224308"/>
    <lineage>
        <taxon>Bacteria</taxon>
        <taxon>Bacillati</taxon>
        <taxon>Bacillota</taxon>
        <taxon>Bacilli</taxon>
        <taxon>Bacillales</taxon>
        <taxon>Bacillaceae</taxon>
        <taxon>Bacillus</taxon>
    </lineage>
</organism>
<proteinExistence type="predicted"/>
<protein>
    <recommendedName>
        <fullName>Uncharacterized protein YeeG</fullName>
    </recommendedName>
</protein>
<comment type="subcellular location">
    <subcellularLocation>
        <location evidence="2">Cell membrane</location>
        <topology evidence="2">Single-pass membrane protein</topology>
    </subcellularLocation>
</comment>
<keyword id="KW-1003">Cell membrane</keyword>
<keyword id="KW-0472">Membrane</keyword>
<keyword id="KW-1185">Reference proteome</keyword>
<keyword id="KW-0812">Transmembrane</keyword>
<keyword id="KW-1133">Transmembrane helix</keyword>
<feature type="chain" id="PRO_0000049517" description="Uncharacterized protein YeeG">
    <location>
        <begin position="1"/>
        <end position="340"/>
    </location>
</feature>
<feature type="transmembrane region" description="Helical" evidence="1">
    <location>
        <begin position="6"/>
        <end position="26"/>
    </location>
</feature>
<accession>O31507</accession>
<sequence length="340" mass="39306">MTKKRITFGLLVLMVCVILFVLYVQLRNKDSIPVQSSAIHPEEDRIFFIYSNPFIKESVLLSTSTGERFNRRTFKVADVPYIQTKSYASTDLVLLAEHEPFYYTLEKDVIKEHPLSDPFAFWYEGKDVTIEAYNVDTTGNEIHINDRKTKKEYTLTLPPLVTMGASDENFIYIIQSMSIYVIDRKTEEMIETLSLASYADQFADSEEFIVASSDHKLTVIEKGTWKTTYIAYPEDLEYADTVYYDKESGSFYVAYEDKEGGANLLEYGEDFSIHTYSLKFPYMEAKFKGNLLYIVAQEEHKKGIGGYVGVFDIHSKEMLYQFDLPEEQVKVQDFVVVDNK</sequence>
<evidence type="ECO:0000255" key="1"/>
<evidence type="ECO:0000305" key="2"/>
<reference key="1">
    <citation type="journal article" date="1997" name="Nature">
        <title>The complete genome sequence of the Gram-positive bacterium Bacillus subtilis.</title>
        <authorList>
            <person name="Kunst F."/>
            <person name="Ogasawara N."/>
            <person name="Moszer I."/>
            <person name="Albertini A.M."/>
            <person name="Alloni G."/>
            <person name="Azevedo V."/>
            <person name="Bertero M.G."/>
            <person name="Bessieres P."/>
            <person name="Bolotin A."/>
            <person name="Borchert S."/>
            <person name="Borriss R."/>
            <person name="Boursier L."/>
            <person name="Brans A."/>
            <person name="Braun M."/>
            <person name="Brignell S.C."/>
            <person name="Bron S."/>
            <person name="Brouillet S."/>
            <person name="Bruschi C.V."/>
            <person name="Caldwell B."/>
            <person name="Capuano V."/>
            <person name="Carter N.M."/>
            <person name="Choi S.-K."/>
            <person name="Codani J.-J."/>
            <person name="Connerton I.F."/>
            <person name="Cummings N.J."/>
            <person name="Daniel R.A."/>
            <person name="Denizot F."/>
            <person name="Devine K.M."/>
            <person name="Duesterhoeft A."/>
            <person name="Ehrlich S.D."/>
            <person name="Emmerson P.T."/>
            <person name="Entian K.-D."/>
            <person name="Errington J."/>
            <person name="Fabret C."/>
            <person name="Ferrari E."/>
            <person name="Foulger D."/>
            <person name="Fritz C."/>
            <person name="Fujita M."/>
            <person name="Fujita Y."/>
            <person name="Fuma S."/>
            <person name="Galizzi A."/>
            <person name="Galleron N."/>
            <person name="Ghim S.-Y."/>
            <person name="Glaser P."/>
            <person name="Goffeau A."/>
            <person name="Golightly E.J."/>
            <person name="Grandi G."/>
            <person name="Guiseppi G."/>
            <person name="Guy B.J."/>
            <person name="Haga K."/>
            <person name="Haiech J."/>
            <person name="Harwood C.R."/>
            <person name="Henaut A."/>
            <person name="Hilbert H."/>
            <person name="Holsappel S."/>
            <person name="Hosono S."/>
            <person name="Hullo M.-F."/>
            <person name="Itaya M."/>
            <person name="Jones L.-M."/>
            <person name="Joris B."/>
            <person name="Karamata D."/>
            <person name="Kasahara Y."/>
            <person name="Klaerr-Blanchard M."/>
            <person name="Klein C."/>
            <person name="Kobayashi Y."/>
            <person name="Koetter P."/>
            <person name="Koningstein G."/>
            <person name="Krogh S."/>
            <person name="Kumano M."/>
            <person name="Kurita K."/>
            <person name="Lapidus A."/>
            <person name="Lardinois S."/>
            <person name="Lauber J."/>
            <person name="Lazarevic V."/>
            <person name="Lee S.-M."/>
            <person name="Levine A."/>
            <person name="Liu H."/>
            <person name="Masuda S."/>
            <person name="Mauel C."/>
            <person name="Medigue C."/>
            <person name="Medina N."/>
            <person name="Mellado R.P."/>
            <person name="Mizuno M."/>
            <person name="Moestl D."/>
            <person name="Nakai S."/>
            <person name="Noback M."/>
            <person name="Noone D."/>
            <person name="O'Reilly M."/>
            <person name="Ogawa K."/>
            <person name="Ogiwara A."/>
            <person name="Oudega B."/>
            <person name="Park S.-H."/>
            <person name="Parro V."/>
            <person name="Pohl T.M."/>
            <person name="Portetelle D."/>
            <person name="Porwollik S."/>
            <person name="Prescott A.M."/>
            <person name="Presecan E."/>
            <person name="Pujic P."/>
            <person name="Purnelle B."/>
            <person name="Rapoport G."/>
            <person name="Rey M."/>
            <person name="Reynolds S."/>
            <person name="Rieger M."/>
            <person name="Rivolta C."/>
            <person name="Rocha E."/>
            <person name="Roche B."/>
            <person name="Rose M."/>
            <person name="Sadaie Y."/>
            <person name="Sato T."/>
            <person name="Scanlan E."/>
            <person name="Schleich S."/>
            <person name="Schroeter R."/>
            <person name="Scoffone F."/>
            <person name="Sekiguchi J."/>
            <person name="Sekowska A."/>
            <person name="Seror S.J."/>
            <person name="Serror P."/>
            <person name="Shin B.-S."/>
            <person name="Soldo B."/>
            <person name="Sorokin A."/>
            <person name="Tacconi E."/>
            <person name="Takagi T."/>
            <person name="Takahashi H."/>
            <person name="Takemaru K."/>
            <person name="Takeuchi M."/>
            <person name="Tamakoshi A."/>
            <person name="Tanaka T."/>
            <person name="Terpstra P."/>
            <person name="Tognoni A."/>
            <person name="Tosato V."/>
            <person name="Uchiyama S."/>
            <person name="Vandenbol M."/>
            <person name="Vannier F."/>
            <person name="Vassarotti A."/>
            <person name="Viari A."/>
            <person name="Wambutt R."/>
            <person name="Wedler E."/>
            <person name="Wedler H."/>
            <person name="Weitzenegger T."/>
            <person name="Winters P."/>
            <person name="Wipat A."/>
            <person name="Yamamoto H."/>
            <person name="Yamane K."/>
            <person name="Yasumoto K."/>
            <person name="Yata K."/>
            <person name="Yoshida K."/>
            <person name="Yoshikawa H.-F."/>
            <person name="Zumstein E."/>
            <person name="Yoshikawa H."/>
            <person name="Danchin A."/>
        </authorList>
    </citation>
    <scope>NUCLEOTIDE SEQUENCE [LARGE SCALE GENOMIC DNA]</scope>
    <source>
        <strain>168</strain>
    </source>
</reference>
<reference key="2">
    <citation type="journal article" date="2009" name="Microbiology">
        <title>From a consortium sequence to a unified sequence: the Bacillus subtilis 168 reference genome a decade later.</title>
        <authorList>
            <person name="Barbe V."/>
            <person name="Cruveiller S."/>
            <person name="Kunst F."/>
            <person name="Lenoble P."/>
            <person name="Meurice G."/>
            <person name="Sekowska A."/>
            <person name="Vallenet D."/>
            <person name="Wang T."/>
            <person name="Moszer I."/>
            <person name="Medigue C."/>
            <person name="Danchin A."/>
        </authorList>
    </citation>
    <scope>SEQUENCE REVISION TO 151-162 AND TO N-TERMINUS</scope>
</reference>
<dbReference type="EMBL" id="AL009126">
    <property type="protein sequence ID" value="CAB12502.2"/>
    <property type="molecule type" value="Genomic_DNA"/>
</dbReference>
<dbReference type="PIR" id="B69793">
    <property type="entry name" value="B69793"/>
</dbReference>
<dbReference type="RefSeq" id="NP_388564.2">
    <property type="nucleotide sequence ID" value="NC_000964.3"/>
</dbReference>
<dbReference type="RefSeq" id="WP_003243884.1">
    <property type="nucleotide sequence ID" value="NZ_OZ025638.1"/>
</dbReference>
<dbReference type="SMR" id="O31507"/>
<dbReference type="FunCoup" id="O31507">
    <property type="interactions" value="35"/>
</dbReference>
<dbReference type="STRING" id="224308.BSU06820"/>
<dbReference type="PaxDb" id="224308-BSU06820"/>
<dbReference type="EnsemblBacteria" id="CAB12502">
    <property type="protein sequence ID" value="CAB12502"/>
    <property type="gene ID" value="BSU_06820"/>
</dbReference>
<dbReference type="GeneID" id="938041"/>
<dbReference type="KEGG" id="bsu:BSU06820"/>
<dbReference type="PATRIC" id="fig|224308.179.peg.741"/>
<dbReference type="eggNOG" id="COG3391">
    <property type="taxonomic scope" value="Bacteria"/>
</dbReference>
<dbReference type="InParanoid" id="O31507"/>
<dbReference type="OrthoDB" id="2930306at2"/>
<dbReference type="BioCyc" id="BSUB:BSU06820-MONOMER"/>
<dbReference type="Proteomes" id="UP000001570">
    <property type="component" value="Chromosome"/>
</dbReference>
<dbReference type="GO" id="GO:0005886">
    <property type="term" value="C:plasma membrane"/>
    <property type="evidence" value="ECO:0007669"/>
    <property type="project" value="UniProtKB-SubCell"/>
</dbReference>
<dbReference type="SUPFAM" id="SSF75011">
    <property type="entry name" value="3-carboxy-cis,cis-mucoante lactonizing enzyme"/>
    <property type="match status" value="1"/>
</dbReference>